<proteinExistence type="evidence at protein level"/>
<keyword id="KW-0025">Alternative splicing</keyword>
<keyword id="KW-0175">Coiled coil</keyword>
<keyword id="KW-0963">Cytoplasm</keyword>
<keyword id="KW-0206">Cytoskeleton</keyword>
<keyword id="KW-0597">Phosphoprotein</keyword>
<keyword id="KW-1267">Proteomics identification</keyword>
<keyword id="KW-1185">Reference proteome</keyword>
<gene>
    <name type="primary">CCDC102B</name>
    <name type="synonym">C18orf14</name>
</gene>
<reference key="1">
    <citation type="journal article" date="2007" name="BMC Genomics">
        <title>The full-ORF clone resource of the German cDNA consortium.</title>
        <authorList>
            <person name="Bechtel S."/>
            <person name="Rosenfelder H."/>
            <person name="Duda A."/>
            <person name="Schmidt C.P."/>
            <person name="Ernst U."/>
            <person name="Wellenreuther R."/>
            <person name="Mehrle A."/>
            <person name="Schuster C."/>
            <person name="Bahr A."/>
            <person name="Bloecker H."/>
            <person name="Heubner D."/>
            <person name="Hoerlein A."/>
            <person name="Michel G."/>
            <person name="Wedler H."/>
            <person name="Koehrer K."/>
            <person name="Ottenwaelder B."/>
            <person name="Poustka A."/>
            <person name="Wiemann S."/>
            <person name="Schupp I."/>
        </authorList>
    </citation>
    <scope>NUCLEOTIDE SEQUENCE [LARGE SCALE MRNA] (ISOFORM 1)</scope>
    <scope>NUCLEOTIDE SEQUENCE [LARGE SCALE MRNA] OF 189-513 (ISOFORM 2)</scope>
    <scope>VARIANTS ASN-153 AND ARG-298</scope>
    <source>
        <tissue>Salivary gland</tissue>
        <tissue>Testis</tissue>
    </source>
</reference>
<reference key="2">
    <citation type="journal article" date="2005" name="Nature">
        <title>DNA sequence and analysis of human chromosome 18.</title>
        <authorList>
            <person name="Nusbaum C."/>
            <person name="Zody M.C."/>
            <person name="Borowsky M.L."/>
            <person name="Kamal M."/>
            <person name="Kodira C.D."/>
            <person name="Taylor T.D."/>
            <person name="Whittaker C.A."/>
            <person name="Chang J.L."/>
            <person name="Cuomo C.A."/>
            <person name="Dewar K."/>
            <person name="FitzGerald M.G."/>
            <person name="Yang X."/>
            <person name="Abouelleil A."/>
            <person name="Allen N.R."/>
            <person name="Anderson S."/>
            <person name="Bloom T."/>
            <person name="Bugalter B."/>
            <person name="Butler J."/>
            <person name="Cook A."/>
            <person name="DeCaprio D."/>
            <person name="Engels R."/>
            <person name="Garber M."/>
            <person name="Gnirke A."/>
            <person name="Hafez N."/>
            <person name="Hall J.L."/>
            <person name="Norman C.H."/>
            <person name="Itoh T."/>
            <person name="Jaffe D.B."/>
            <person name="Kuroki Y."/>
            <person name="Lehoczky J."/>
            <person name="Lui A."/>
            <person name="Macdonald P."/>
            <person name="Mauceli E."/>
            <person name="Mikkelsen T.S."/>
            <person name="Naylor J.W."/>
            <person name="Nicol R."/>
            <person name="Nguyen C."/>
            <person name="Noguchi H."/>
            <person name="O'Leary S.B."/>
            <person name="Piqani B."/>
            <person name="Smith C.L."/>
            <person name="Talamas J.A."/>
            <person name="Topham K."/>
            <person name="Totoki Y."/>
            <person name="Toyoda A."/>
            <person name="Wain H.M."/>
            <person name="Young S.K."/>
            <person name="Zeng Q."/>
            <person name="Zimmer A.R."/>
            <person name="Fujiyama A."/>
            <person name="Hattori M."/>
            <person name="Birren B.W."/>
            <person name="Sakaki Y."/>
            <person name="Lander E.S."/>
        </authorList>
    </citation>
    <scope>NUCLEOTIDE SEQUENCE [LARGE SCALE GENOMIC DNA]</scope>
</reference>
<reference key="3">
    <citation type="journal article" date="2004" name="Genome Res.">
        <title>The status, quality, and expansion of the NIH full-length cDNA project: the Mammalian Gene Collection (MGC).</title>
        <authorList>
            <consortium name="The MGC Project Team"/>
        </authorList>
    </citation>
    <scope>NUCLEOTIDE SEQUENCE [LARGE SCALE MRNA] (ISOFORM 1)</scope>
    <source>
        <tissue>Lung</tissue>
        <tissue>Testis</tissue>
    </source>
</reference>
<reference key="4">
    <citation type="journal article" date="2004" name="Nat. Genet.">
        <title>Complete sequencing and characterization of 21,243 full-length human cDNAs.</title>
        <authorList>
            <person name="Ota T."/>
            <person name="Suzuki Y."/>
            <person name="Nishikawa T."/>
            <person name="Otsuki T."/>
            <person name="Sugiyama T."/>
            <person name="Irie R."/>
            <person name="Wakamatsu A."/>
            <person name="Hayashi K."/>
            <person name="Sato H."/>
            <person name="Nagai K."/>
            <person name="Kimura K."/>
            <person name="Makita H."/>
            <person name="Sekine M."/>
            <person name="Obayashi M."/>
            <person name="Nishi T."/>
            <person name="Shibahara T."/>
            <person name="Tanaka T."/>
            <person name="Ishii S."/>
            <person name="Yamamoto J."/>
            <person name="Saito K."/>
            <person name="Kawai Y."/>
            <person name="Isono Y."/>
            <person name="Nakamura Y."/>
            <person name="Nagahari K."/>
            <person name="Murakami K."/>
            <person name="Yasuda T."/>
            <person name="Iwayanagi T."/>
            <person name="Wagatsuma M."/>
            <person name="Shiratori A."/>
            <person name="Sudo H."/>
            <person name="Hosoiri T."/>
            <person name="Kaku Y."/>
            <person name="Kodaira H."/>
            <person name="Kondo H."/>
            <person name="Sugawara M."/>
            <person name="Takahashi M."/>
            <person name="Kanda K."/>
            <person name="Yokoi T."/>
            <person name="Furuya T."/>
            <person name="Kikkawa E."/>
            <person name="Omura Y."/>
            <person name="Abe K."/>
            <person name="Kamihara K."/>
            <person name="Katsuta N."/>
            <person name="Sato K."/>
            <person name="Tanikawa M."/>
            <person name="Yamazaki M."/>
            <person name="Ninomiya K."/>
            <person name="Ishibashi T."/>
            <person name="Yamashita H."/>
            <person name="Murakawa K."/>
            <person name="Fujimori K."/>
            <person name="Tanai H."/>
            <person name="Kimata M."/>
            <person name="Watanabe M."/>
            <person name="Hiraoka S."/>
            <person name="Chiba Y."/>
            <person name="Ishida S."/>
            <person name="Ono Y."/>
            <person name="Takiguchi S."/>
            <person name="Watanabe S."/>
            <person name="Yosida M."/>
            <person name="Hotuta T."/>
            <person name="Kusano J."/>
            <person name="Kanehori K."/>
            <person name="Takahashi-Fujii A."/>
            <person name="Hara H."/>
            <person name="Tanase T.-O."/>
            <person name="Nomura Y."/>
            <person name="Togiya S."/>
            <person name="Komai F."/>
            <person name="Hara R."/>
            <person name="Takeuchi K."/>
            <person name="Arita M."/>
            <person name="Imose N."/>
            <person name="Musashino K."/>
            <person name="Yuuki H."/>
            <person name="Oshima A."/>
            <person name="Sasaki N."/>
            <person name="Aotsuka S."/>
            <person name="Yoshikawa Y."/>
            <person name="Matsunawa H."/>
            <person name="Ichihara T."/>
            <person name="Shiohata N."/>
            <person name="Sano S."/>
            <person name="Moriya S."/>
            <person name="Momiyama H."/>
            <person name="Satoh N."/>
            <person name="Takami S."/>
            <person name="Terashima Y."/>
            <person name="Suzuki O."/>
            <person name="Nakagawa S."/>
            <person name="Senoh A."/>
            <person name="Mizoguchi H."/>
            <person name="Goto Y."/>
            <person name="Shimizu F."/>
            <person name="Wakebe H."/>
            <person name="Hishigaki H."/>
            <person name="Watanabe T."/>
            <person name="Sugiyama A."/>
            <person name="Takemoto M."/>
            <person name="Kawakami B."/>
            <person name="Yamazaki M."/>
            <person name="Watanabe K."/>
            <person name="Kumagai A."/>
            <person name="Itakura S."/>
            <person name="Fukuzumi Y."/>
            <person name="Fujimori Y."/>
            <person name="Komiyama M."/>
            <person name="Tashiro H."/>
            <person name="Tanigami A."/>
            <person name="Fujiwara T."/>
            <person name="Ono T."/>
            <person name="Yamada K."/>
            <person name="Fujii Y."/>
            <person name="Ozaki K."/>
            <person name="Hirao M."/>
            <person name="Ohmori Y."/>
            <person name="Kawabata A."/>
            <person name="Hikiji T."/>
            <person name="Kobatake N."/>
            <person name="Inagaki H."/>
            <person name="Ikema Y."/>
            <person name="Okamoto S."/>
            <person name="Okitani R."/>
            <person name="Kawakami T."/>
            <person name="Noguchi S."/>
            <person name="Itoh T."/>
            <person name="Shigeta K."/>
            <person name="Senba T."/>
            <person name="Matsumura K."/>
            <person name="Nakajima Y."/>
            <person name="Mizuno T."/>
            <person name="Morinaga M."/>
            <person name="Sasaki M."/>
            <person name="Togashi T."/>
            <person name="Oyama M."/>
            <person name="Hata H."/>
            <person name="Watanabe M."/>
            <person name="Komatsu T."/>
            <person name="Mizushima-Sugano J."/>
            <person name="Satoh T."/>
            <person name="Shirai Y."/>
            <person name="Takahashi Y."/>
            <person name="Nakagawa K."/>
            <person name="Okumura K."/>
            <person name="Nagase T."/>
            <person name="Nomura N."/>
            <person name="Kikuchi H."/>
            <person name="Masuho Y."/>
            <person name="Yamashita R."/>
            <person name="Nakai K."/>
            <person name="Yada T."/>
            <person name="Nakamura Y."/>
            <person name="Ohara O."/>
            <person name="Isogai T."/>
            <person name="Sugano S."/>
        </authorList>
    </citation>
    <scope>NUCLEOTIDE SEQUENCE [LARGE SCALE MRNA] OF 199-513 (ISOFORM 1)</scope>
    <source>
        <tissue>Lung</tissue>
    </source>
</reference>
<reference key="5">
    <citation type="journal article" date="2018" name="J. Cell Sci.">
        <title>CCDC102B functions in centrosome linker assembly and centrosome cohesion.</title>
        <authorList>
            <person name="Xia Y."/>
            <person name="Huang N."/>
            <person name="Chen Z."/>
            <person name="Li F."/>
            <person name="Fan G."/>
            <person name="Ma D."/>
            <person name="Chen J."/>
            <person name="Teng J."/>
        </authorList>
    </citation>
    <scope>FUNCTION</scope>
    <scope>INTERACTION WITH CEP250; CROCC; LRRC45 AND NEK2</scope>
    <scope>SUBCELLULAR LOCATION</scope>
    <scope>PHOSPHORYLATION AT SER-21; SER-22; SER-34; SER-135; SER-142; SER-194; SER-210; SER-401; SER-404 AND SER-406</scope>
    <scope>MUTAGENESIS OF SER-21; SER-22; SER-34; SER-135; SER-142; SER-194; SER-210; SER-401; SER-404 AND SER-406</scope>
</reference>
<protein>
    <recommendedName>
        <fullName>Coiled-coil domain-containing protein 102B</fullName>
    </recommendedName>
</protein>
<comment type="function">
    <text evidence="4">During interphase, forms fibers at the proximal ends of centrioles to maintain centrosome cohesion (PubMed:30404835). During mitosis, dissociates from the centrosome following phosphorylation to allow centrosome separation (PubMed:30404835). Contributes to CROCC/rootletin filament formation (PubMed:30404835).</text>
</comment>
<comment type="subunit">
    <text evidence="4">Interacts (via N-terminus) with centriolar protein CEP250/CNAP1; the interaction results in recruitment of CCDC102B to the proximal ends of centrioles (PubMed:30404835). Interacts (via N-terminus) with CROCC/rootletin and LRRC45 (PubMed:30404835). Interacts (via N-terminus) with serine/threonine-protein kinase NEK2; the interaction results in phosphorylation of CCDC102B (PubMed:30404835).</text>
</comment>
<comment type="interaction">
    <interactant intactId="EBI-10171570">
        <id>Q68D86</id>
    </interactant>
    <interactant intactId="EBI-743598">
        <id>Q9NYB9</id>
        <label>ABI2</label>
    </interactant>
    <organismsDiffer>false</organismsDiffer>
    <experiments>5</experiments>
</comment>
<comment type="interaction">
    <interactant intactId="EBI-10171570">
        <id>Q68D86</id>
    </interactant>
    <interactant intactId="EBI-11096309">
        <id>Q9NYB9-2</id>
        <label>ABI2</label>
    </interactant>
    <organismsDiffer>false</organismsDiffer>
    <experiments>3</experiments>
</comment>
<comment type="interaction">
    <interactant intactId="EBI-10171570">
        <id>Q68D86</id>
    </interactant>
    <interactant intactId="EBI-8466265">
        <id>Q96MA6</id>
        <label>AK8</label>
    </interactant>
    <organismsDiffer>false</organismsDiffer>
    <experiments>3</experiments>
</comment>
<comment type="interaction">
    <interactant intactId="EBI-10171570">
        <id>Q68D86</id>
    </interactant>
    <interactant intactId="EBI-5661893">
        <id>Q86SG2</id>
        <label>ANKRD23</label>
    </interactant>
    <organismsDiffer>false</organismsDiffer>
    <experiments>3</experiments>
</comment>
<comment type="interaction">
    <interactant intactId="EBI-10171570">
        <id>Q68D86</id>
    </interactant>
    <interactant intactId="EBI-2875746">
        <id>P40617</id>
        <label>ARL4A</label>
    </interactant>
    <organismsDiffer>false</organismsDiffer>
    <experiments>3</experiments>
</comment>
<comment type="interaction">
    <interactant intactId="EBI-10171570">
        <id>Q68D86</id>
    </interactant>
    <interactant intactId="EBI-711726">
        <id>P49703</id>
        <label>ARL4D</label>
    </interactant>
    <organismsDiffer>false</organismsDiffer>
    <experiments>4</experiments>
</comment>
<comment type="interaction">
    <interactant intactId="EBI-10171570">
        <id>Q68D86</id>
    </interactant>
    <interactant intactId="EBI-358049">
        <id>Q13895</id>
        <label>BYSL</label>
    </interactant>
    <organismsDiffer>false</organismsDiffer>
    <experiments>6</experiments>
</comment>
<comment type="interaction">
    <interactant intactId="EBI-10171570">
        <id>Q68D86</id>
    </interactant>
    <interactant intactId="EBI-18396958">
        <id>A1L168</id>
        <label>C20orf202</label>
    </interactant>
    <organismsDiffer>false</organismsDiffer>
    <experiments>3</experiments>
</comment>
<comment type="interaction">
    <interactant intactId="EBI-10171570">
        <id>Q68D86</id>
    </interactant>
    <interactant intactId="EBI-714838">
        <id>O00305</id>
        <label>CACNB4</label>
    </interactant>
    <organismsDiffer>false</organismsDiffer>
    <experiments>3</experiments>
</comment>
<comment type="interaction">
    <interactant intactId="EBI-10171570">
        <id>Q68D86</id>
    </interactant>
    <interactant intactId="EBI-11532021">
        <id>P20807-4</id>
        <label>CAPN3</label>
    </interactant>
    <organismsDiffer>false</organismsDiffer>
    <experiments>3</experiments>
</comment>
<comment type="interaction">
    <interactant intactId="EBI-10171570">
        <id>Q68D86</id>
    </interactant>
    <interactant intactId="EBI-744556">
        <id>Q96HB5</id>
        <label>CCDC120</label>
    </interactant>
    <organismsDiffer>false</organismsDiffer>
    <experiments>3</experiments>
</comment>
<comment type="interaction">
    <interactant intactId="EBI-10171570">
        <id>Q68D86</id>
    </interactant>
    <interactant intactId="EBI-10185348">
        <id>Q96HB5-4</id>
        <label>CCDC120</label>
    </interactant>
    <organismsDiffer>false</organismsDiffer>
    <experiments>4</experiments>
</comment>
<comment type="interaction">
    <interactant intactId="EBI-10171570">
        <id>Q68D86</id>
    </interactant>
    <interactant intactId="EBI-10175300">
        <id>Q8TD31-3</id>
        <label>CCHCR1</label>
    </interactant>
    <organismsDiffer>false</organismsDiffer>
    <experiments>6</experiments>
</comment>
<comment type="interaction">
    <interactant intactId="EBI-10171570">
        <id>Q68D86</id>
    </interactant>
    <interactant intactId="EBI-746238">
        <id>Q07002</id>
        <label>CDK18</label>
    </interactant>
    <organismsDiffer>false</organismsDiffer>
    <experiments>3</experiments>
</comment>
<comment type="interaction">
    <interactant intactId="EBI-10171570">
        <id>Q68D86</id>
    </interactant>
    <interactant intactId="EBI-741885">
        <id>Q96LK0</id>
        <label>CEP19</label>
    </interactant>
    <organismsDiffer>false</organismsDiffer>
    <experiments>6</experiments>
</comment>
<comment type="interaction">
    <interactant intactId="EBI-10171570">
        <id>Q68D86</id>
    </interactant>
    <interactant intactId="EBI-10181988">
        <id>Q8IYX8-2</id>
        <label>CEP57L1</label>
    </interactant>
    <organismsDiffer>false</organismsDiffer>
    <experiments>3</experiments>
</comment>
<comment type="interaction">
    <interactant intactId="EBI-10171570">
        <id>Q68D86</id>
    </interactant>
    <interactant intactId="EBI-5453285">
        <id>Q2TBE0</id>
        <label>CWF19L2</label>
    </interactant>
    <organismsDiffer>false</organismsDiffer>
    <experiments>3</experiments>
</comment>
<comment type="interaction">
    <interactant intactId="EBI-10171570">
        <id>Q68D86</id>
    </interactant>
    <interactant intactId="EBI-11988027">
        <id>Q9NRI5-2</id>
        <label>DISC1</label>
    </interactant>
    <organismsDiffer>false</organismsDiffer>
    <experiments>3</experiments>
</comment>
<comment type="interaction">
    <interactant intactId="EBI-10171570">
        <id>Q68D86</id>
    </interactant>
    <interactant intactId="EBI-748520">
        <id>Q96BY6</id>
        <label>DOCK10</label>
    </interactant>
    <organismsDiffer>false</organismsDiffer>
    <experiments>3</experiments>
</comment>
<comment type="interaction">
    <interactant intactId="EBI-10171570">
        <id>Q68D86</id>
    </interactant>
    <interactant intactId="EBI-2349927">
        <id>Q5JST6</id>
        <label>EFHC2</label>
    </interactant>
    <organismsDiffer>false</organismsDiffer>
    <experiments>3</experiments>
</comment>
<comment type="interaction">
    <interactant intactId="EBI-10171570">
        <id>Q68D86</id>
    </interactant>
    <interactant intactId="EBI-2339219">
        <id>Q08426</id>
        <label>EHHADH</label>
    </interactant>
    <organismsDiffer>false</organismsDiffer>
    <experiments>4</experiments>
</comment>
<comment type="interaction">
    <interactant intactId="EBI-10171570">
        <id>Q68D86</id>
    </interactant>
    <interactant intactId="EBI-744099">
        <id>Q9H0I2</id>
        <label>ENKD1</label>
    </interactant>
    <organismsDiffer>false</organismsDiffer>
    <experiments>6</experiments>
</comment>
<comment type="interaction">
    <interactant intactId="EBI-10171570">
        <id>Q68D86</id>
    </interactant>
    <interactant intactId="EBI-949824">
        <id>O00471</id>
        <label>EXOC5</label>
    </interactant>
    <organismsDiffer>false</organismsDiffer>
    <experiments>3</experiments>
</comment>
<comment type="interaction">
    <interactant intactId="EBI-10171570">
        <id>Q68D86</id>
    </interactant>
    <interactant intactId="EBI-719941">
        <id>Q3B820</id>
        <label>FAM161A</label>
    </interactant>
    <organismsDiffer>false</organismsDiffer>
    <experiments>6</experiments>
</comment>
<comment type="interaction">
    <interactant intactId="EBI-10171570">
        <id>Q68D86</id>
    </interactant>
    <interactant intactId="EBI-19153639">
        <id>Q9NTX9</id>
        <label>FAM217B</label>
    </interactant>
    <organismsDiffer>false</organismsDiffer>
    <experiments>3</experiments>
</comment>
<comment type="interaction">
    <interactant intactId="EBI-10171570">
        <id>Q68D86</id>
    </interactant>
    <interactant intactId="EBI-10244131">
        <id>Q8TES7-6</id>
        <label>FBF1</label>
    </interactant>
    <organismsDiffer>false</organismsDiffer>
    <experiments>3</experiments>
</comment>
<comment type="interaction">
    <interactant intactId="EBI-10171570">
        <id>Q68D86</id>
    </interactant>
    <interactant intactId="EBI-1050358">
        <id>P07954</id>
        <label>FH</label>
    </interactant>
    <organismsDiffer>false</organismsDiffer>
    <experiments>3</experiments>
</comment>
<comment type="interaction">
    <interactant intactId="EBI-10171570">
        <id>Q68D86</id>
    </interactant>
    <interactant intactId="EBI-603643">
        <id>O75955</id>
        <label>FLOT1</label>
    </interactant>
    <organismsDiffer>false</organismsDiffer>
    <experiments>3</experiments>
</comment>
<comment type="interaction">
    <interactant intactId="EBI-10171570">
        <id>Q68D86</id>
    </interactant>
    <interactant intactId="EBI-744935">
        <id>Q9BVV2</id>
        <label>FNDC11</label>
    </interactant>
    <organismsDiffer>false</organismsDiffer>
    <experiments>3</experiments>
</comment>
<comment type="interaction">
    <interactant intactId="EBI-10171570">
        <id>Q68D86</id>
    </interactant>
    <interactant intactId="EBI-744104">
        <id>P55040</id>
        <label>GEM</label>
    </interactant>
    <organismsDiffer>false</organismsDiffer>
    <experiments>3</experiments>
</comment>
<comment type="interaction">
    <interactant intactId="EBI-10171570">
        <id>Q68D86</id>
    </interactant>
    <interactant intactId="EBI-349832">
        <id>Q9HD26</id>
        <label>GOPC</label>
    </interactant>
    <organismsDiffer>false</organismsDiffer>
    <experiments>3</experiments>
</comment>
<comment type="interaction">
    <interactant intactId="EBI-10171570">
        <id>Q68D86</id>
    </interactant>
    <interactant intactId="EBI-11102276">
        <id>Q9HD26-2</id>
        <label>GOPC</label>
    </interactant>
    <organismsDiffer>false</organismsDiffer>
    <experiments>4</experiments>
</comment>
<comment type="interaction">
    <interactant intactId="EBI-10171570">
        <id>Q68D86</id>
    </interactant>
    <interactant intactId="EBI-713401">
        <id>Q9P0W2</id>
        <label>HMG20B</label>
    </interactant>
    <organismsDiffer>false</organismsDiffer>
    <experiments>6</experiments>
</comment>
<comment type="interaction">
    <interactant intactId="EBI-10171570">
        <id>Q68D86</id>
    </interactant>
    <interactant intactId="EBI-747204">
        <id>Q9UKT9</id>
        <label>IKZF3</label>
    </interactant>
    <organismsDiffer>false</organismsDiffer>
    <experiments>3</experiments>
</comment>
<comment type="interaction">
    <interactant intactId="EBI-10171570">
        <id>Q68D86</id>
    </interactant>
    <interactant intactId="EBI-2125614">
        <id>Q9BVG8</id>
        <label>KIFC3</label>
    </interactant>
    <organismsDiffer>false</organismsDiffer>
    <experiments>3</experiments>
</comment>
<comment type="interaction">
    <interactant intactId="EBI-10171570">
        <id>Q68D86</id>
    </interactant>
    <interactant intactId="EBI-358297">
        <id>O00505</id>
        <label>KPNA3</label>
    </interactant>
    <organismsDiffer>false</organismsDiffer>
    <experiments>3</experiments>
</comment>
<comment type="interaction">
    <interactant intactId="EBI-10171570">
        <id>Q68D86</id>
    </interactant>
    <interactant intactId="EBI-2949715">
        <id>O95678</id>
        <label>KRT75</label>
    </interactant>
    <organismsDiffer>false</organismsDiffer>
    <experiments>3</experiments>
</comment>
<comment type="interaction">
    <interactant intactId="EBI-10171570">
        <id>Q68D86</id>
    </interactant>
    <interactant intactId="EBI-10241252">
        <id>Q3SY46</id>
        <label>KRTAP13-3</label>
    </interactant>
    <organismsDiffer>false</organismsDiffer>
    <experiments>3</experiments>
</comment>
<comment type="interaction">
    <interactant intactId="EBI-10171570">
        <id>Q68D86</id>
    </interactant>
    <interactant intactId="EBI-726510">
        <id>Q96BZ8</id>
        <label>LENG1</label>
    </interactant>
    <organismsDiffer>false</organismsDiffer>
    <experiments>3</experiments>
</comment>
<comment type="interaction">
    <interactant intactId="EBI-10171570">
        <id>Q68D86</id>
    </interactant>
    <interactant intactId="EBI-2798728">
        <id>P61968</id>
        <label>LMO4</label>
    </interactant>
    <organismsDiffer>false</organismsDiffer>
    <experiments>6</experiments>
</comment>
<comment type="interaction">
    <interactant intactId="EBI-10171570">
        <id>Q68D86</id>
    </interactant>
    <interactant intactId="EBI-739832">
        <id>Q8TBB1</id>
        <label>LNX1</label>
    </interactant>
    <organismsDiffer>false</organismsDiffer>
    <experiments>4</experiments>
</comment>
<comment type="interaction">
    <interactant intactId="EBI-10171570">
        <id>Q68D86</id>
    </interactant>
    <interactant intactId="EBI-1216080">
        <id>Q9Y250</id>
        <label>LZTS1</label>
    </interactant>
    <organismsDiffer>false</organismsDiffer>
    <experiments>3</experiments>
</comment>
<comment type="interaction">
    <interactant intactId="EBI-10171570">
        <id>Q68D86</id>
    </interactant>
    <interactant intactId="EBI-6659161">
        <id>Q9Y586</id>
        <label>MAB21L2</label>
    </interactant>
    <organismsDiffer>false</organismsDiffer>
    <experiments>3</experiments>
</comment>
<comment type="interaction">
    <interactant intactId="EBI-10171570">
        <id>Q68D86</id>
    </interactant>
    <interactant intactId="EBI-746778">
        <id>Q96A72</id>
        <label>MAGOHB</label>
    </interactant>
    <organismsDiffer>false</organismsDiffer>
    <experiments>6</experiments>
</comment>
<comment type="interaction">
    <interactant intactId="EBI-10171570">
        <id>Q68D86</id>
    </interactant>
    <interactant intactId="EBI-355924">
        <id>P33993</id>
        <label>MCM7</label>
    </interactant>
    <organismsDiffer>false</organismsDiffer>
    <experiments>3</experiments>
</comment>
<comment type="interaction">
    <interactant intactId="EBI-10171570">
        <id>Q68D86</id>
    </interactant>
    <interactant intactId="EBI-2864512">
        <id>P50221</id>
        <label>MEOX1</label>
    </interactant>
    <organismsDiffer>false</organismsDiffer>
    <experiments>3</experiments>
</comment>
<comment type="interaction">
    <interactant intactId="EBI-10171570">
        <id>Q68D86</id>
    </interactant>
    <interactant intactId="EBI-16439278">
        <id>Q6FHY5</id>
        <label>MEOX2</label>
    </interactant>
    <organismsDiffer>false</organismsDiffer>
    <experiments>3</experiments>
</comment>
<comment type="interaction">
    <interactant intactId="EBI-10171570">
        <id>Q68D86</id>
    </interactant>
    <interactant intactId="EBI-1048159">
        <id>P55081</id>
        <label>MFAP1</label>
    </interactant>
    <organismsDiffer>false</organismsDiffer>
    <experiments>3</experiments>
</comment>
<comment type="interaction">
    <interactant intactId="EBI-10171570">
        <id>Q68D86</id>
    </interactant>
    <interactant intactId="EBI-14086479">
        <id>Q8IVT4</id>
        <label>MGC50722</label>
    </interactant>
    <organismsDiffer>false</organismsDiffer>
    <experiments>3</experiments>
</comment>
<comment type="interaction">
    <interactant intactId="EBI-10171570">
        <id>Q68D86</id>
    </interactant>
    <interactant intactId="EBI-1757866">
        <id>P00540</id>
        <label>MOS</label>
    </interactant>
    <organismsDiffer>false</organismsDiffer>
    <experiments>3</experiments>
</comment>
<comment type="interaction">
    <interactant intactId="EBI-10171570">
        <id>Q68D86</id>
    </interactant>
    <interactant intactId="EBI-6447480">
        <id>P35548</id>
        <label>MSX2</label>
    </interactant>
    <organismsDiffer>false</organismsDiffer>
    <experiments>3</experiments>
</comment>
<comment type="interaction">
    <interactant intactId="EBI-10171570">
        <id>Q68D86</id>
    </interactant>
    <interactant intactId="EBI-740897">
        <id>Q9GZT8</id>
        <label>NIF3L1</label>
    </interactant>
    <organismsDiffer>false</organismsDiffer>
    <experiments>6</experiments>
</comment>
<comment type="interaction">
    <interactant intactId="EBI-10171570">
        <id>Q68D86</id>
    </interactant>
    <interactant intactId="EBI-744871">
        <id>O00746</id>
        <label>NME4</label>
    </interactant>
    <organismsDiffer>false</organismsDiffer>
    <experiments>3</experiments>
</comment>
<comment type="interaction">
    <interactant intactId="EBI-10171570">
        <id>Q68D86</id>
    </interactant>
    <interactant intactId="EBI-741158">
        <id>Q96HA8</id>
        <label>NTAQ1</label>
    </interactant>
    <organismsDiffer>false</organismsDiffer>
    <experiments>4</experiments>
</comment>
<comment type="interaction">
    <interactant intactId="EBI-10171570">
        <id>Q68D86</id>
    </interactant>
    <interactant intactId="EBI-752122">
        <id>Q9NPJ8</id>
        <label>NXT2</label>
    </interactant>
    <organismsDiffer>false</organismsDiffer>
    <experiments>3</experiments>
</comment>
<comment type="interaction">
    <interactant intactId="EBI-10171570">
        <id>Q68D86</id>
    </interactant>
    <interactant intactId="EBI-764534">
        <id>Q16877</id>
        <label>PFKFB4</label>
    </interactant>
    <organismsDiffer>false</organismsDiffer>
    <experiments>3</experiments>
</comment>
<comment type="interaction">
    <interactant intactId="EBI-10171570">
        <id>Q68D86</id>
    </interactant>
    <interactant intactId="EBI-946080">
        <id>Q9BSU1</id>
        <label>PHAF1</label>
    </interactant>
    <organismsDiffer>false</organismsDiffer>
    <experiments>5</experiments>
</comment>
<comment type="interaction">
    <interactant intactId="EBI-10171570">
        <id>Q68D86</id>
    </interactant>
    <interactant intactId="EBI-79165">
        <id>Q9NRD5</id>
        <label>PICK1</label>
    </interactant>
    <organismsDiffer>false</organismsDiffer>
    <experiments>3</experiments>
</comment>
<comment type="interaction">
    <interactant intactId="EBI-10171570">
        <id>Q68D86</id>
    </interactant>
    <interactant intactId="EBI-10171633">
        <id>Q96PV4</id>
        <label>PNMA5</label>
    </interactant>
    <organismsDiffer>false</organismsDiffer>
    <experiments>8</experiments>
</comment>
<comment type="interaction">
    <interactant intactId="EBI-10171570">
        <id>Q68D86</id>
    </interactant>
    <interactant intactId="EBI-12219503">
        <id>P01189</id>
        <label>POMC</label>
    </interactant>
    <organismsDiffer>false</organismsDiffer>
    <experiments>3</experiments>
</comment>
<comment type="interaction">
    <interactant intactId="EBI-10171570">
        <id>Q68D86</id>
    </interactant>
    <interactant intactId="EBI-366525">
        <id>Q969H6</id>
        <label>POP5</label>
    </interactant>
    <organismsDiffer>false</organismsDiffer>
    <experiments>6</experiments>
</comment>
<comment type="interaction">
    <interactant intactId="EBI-10171570">
        <id>Q68D86</id>
    </interactant>
    <interactant intactId="EBI-1105153">
        <id>Q96KQ4</id>
        <label>PPP1R13B</label>
    </interactant>
    <organismsDiffer>false</organismsDiffer>
    <experiments>3</experiments>
</comment>
<comment type="interaction">
    <interactant intactId="EBI-10171570">
        <id>Q68D86</id>
    </interactant>
    <interactant intactId="EBI-2557469">
        <id>Q6NYC8</id>
        <label>PPP1R18</label>
    </interactant>
    <organismsDiffer>false</organismsDiffer>
    <experiments>6</experiments>
</comment>
<comment type="interaction">
    <interactant intactId="EBI-10171570">
        <id>Q68D86</id>
    </interactant>
    <interactant intactId="EBI-2798416">
        <id>Q99633</id>
        <label>PRPF18</label>
    </interactant>
    <organismsDiffer>false</organismsDiffer>
    <experiments>3</experiments>
</comment>
<comment type="interaction">
    <interactant intactId="EBI-10171570">
        <id>Q68D86</id>
    </interactant>
    <interactant intactId="EBI-359352">
        <id>P25786</id>
        <label>PSMA1</label>
    </interactant>
    <organismsDiffer>false</organismsDiffer>
    <experiments>6</experiments>
</comment>
<comment type="interaction">
    <interactant intactId="EBI-10171570">
        <id>Q68D86</id>
    </interactant>
    <interactant intactId="EBI-3437896">
        <id>Q86YV0</id>
        <label>RASAL3</label>
    </interactant>
    <organismsDiffer>false</organismsDiffer>
    <experiments>3</experiments>
</comment>
<comment type="interaction">
    <interactant intactId="EBI-10171570">
        <id>Q68D86</id>
    </interactant>
    <interactant intactId="EBI-743428">
        <id>Q9P2K3</id>
        <label>RCOR3</label>
    </interactant>
    <organismsDiffer>false</organismsDiffer>
    <experiments>3</experiments>
</comment>
<comment type="interaction">
    <interactant intactId="EBI-10171570">
        <id>Q68D86</id>
    </interactant>
    <interactant intactId="EBI-748350">
        <id>Q9UHP6</id>
        <label>RSPH14</label>
    </interactant>
    <organismsDiffer>false</organismsDiffer>
    <experiments>6</experiments>
</comment>
<comment type="interaction">
    <interactant intactId="EBI-10171570">
        <id>Q68D86</id>
    </interactant>
    <interactant intactId="EBI-741643">
        <id>Q9BWD3</id>
        <label>RTL8A</label>
    </interactant>
    <organismsDiffer>false</organismsDiffer>
    <experiments>3</experiments>
</comment>
<comment type="interaction">
    <interactant intactId="EBI-10171570">
        <id>Q68D86</id>
    </interactant>
    <interactant intactId="EBI-10238588">
        <id>Q17RB0</id>
        <label>RTL8B</label>
    </interactant>
    <organismsDiffer>false</organismsDiffer>
    <experiments>3</experiments>
</comment>
<comment type="interaction">
    <interactant intactId="EBI-10171570">
        <id>Q68D86</id>
    </interactant>
    <interactant intactId="EBI-10174072">
        <id>A6ZKI3</id>
        <label>RTL8C</label>
    </interactant>
    <organismsDiffer>false</organismsDiffer>
    <experiments>3</experiments>
</comment>
<comment type="interaction">
    <interactant intactId="EBI-10171570">
        <id>Q68D86</id>
    </interactant>
    <interactant intactId="EBI-727004">
        <id>O00560</id>
        <label>SDCBP</label>
    </interactant>
    <organismsDiffer>false</organismsDiffer>
    <experiments>3</experiments>
</comment>
<comment type="interaction">
    <interactant intactId="EBI-10171570">
        <id>Q68D86</id>
    </interactant>
    <interactant intactId="EBI-476295">
        <id>P31947</id>
        <label>SFN</label>
    </interactant>
    <organismsDiffer>false</organismsDiffer>
    <experiments>3</experiments>
</comment>
<comment type="interaction">
    <interactant intactId="EBI-10171570">
        <id>Q68D86</id>
    </interactant>
    <interactant intactId="EBI-743117">
        <id>Q96ES7</id>
        <label>SGF29</label>
    </interactant>
    <organismsDiffer>false</organismsDiffer>
    <experiments>3</experiments>
</comment>
<comment type="interaction">
    <interactant intactId="EBI-10171570">
        <id>Q68D86</id>
    </interactant>
    <interactant intactId="EBI-2130111">
        <id>Q8TEC5</id>
        <label>SH3RF2</label>
    </interactant>
    <organismsDiffer>false</organismsDiffer>
    <experiments>3</experiments>
</comment>
<comment type="interaction">
    <interactant intactId="EBI-10171570">
        <id>Q68D86</id>
    </interactant>
    <interactant intactId="EBI-1050793">
        <id>Q9GZT3</id>
        <label>SLIRP</label>
    </interactant>
    <organismsDiffer>false</organismsDiffer>
    <experiments>3</experiments>
</comment>
<comment type="interaction">
    <interactant intactId="EBI-10171570">
        <id>Q68D86</id>
    </interactant>
    <interactant intactId="EBI-358489">
        <id>Q96GM5</id>
        <label>SMARCD1</label>
    </interactant>
    <organismsDiffer>false</organismsDiffer>
    <experiments>3</experiments>
</comment>
<comment type="interaction">
    <interactant intactId="EBI-10171570">
        <id>Q68D86</id>
    </interactant>
    <interactant intactId="EBI-296723">
        <id>O95295</id>
        <label>SNAPIN</label>
    </interactant>
    <organismsDiffer>false</organismsDiffer>
    <experiments>3</experiments>
</comment>
<comment type="interaction">
    <interactant intactId="EBI-10171570">
        <id>Q68D86</id>
    </interactant>
    <interactant intactId="EBI-741237">
        <id>O60504</id>
        <label>SORBS3</label>
    </interactant>
    <organismsDiffer>false</organismsDiffer>
    <experiments>3</experiments>
</comment>
<comment type="interaction">
    <interactant intactId="EBI-10171570">
        <id>Q68D86</id>
    </interactant>
    <interactant intactId="EBI-11334239">
        <id>Q8TC71</id>
        <label>SPATA18</label>
    </interactant>
    <organismsDiffer>false</organismsDiffer>
    <experiments>3</experiments>
</comment>
<comment type="interaction">
    <interactant intactId="EBI-10171570">
        <id>Q68D86</id>
    </interactant>
    <interactant intactId="EBI-744066">
        <id>Q9UM82</id>
        <label>SPATA2</label>
    </interactant>
    <organismsDiffer>false</organismsDiffer>
    <experiments>3</experiments>
</comment>
<comment type="interaction">
    <interactant intactId="EBI-10171570">
        <id>Q68D86</id>
    </interactant>
    <interactant intactId="EBI-742688">
        <id>Q9NZD8</id>
        <label>SPG21</label>
    </interactant>
    <organismsDiffer>false</organismsDiffer>
    <experiments>6</experiments>
</comment>
<comment type="interaction">
    <interactant intactId="EBI-10171570">
        <id>Q68D86</id>
    </interactant>
    <interactant intactId="EBI-6872807">
        <id>Q8N0S2</id>
        <label>SYCE1</label>
    </interactant>
    <organismsDiffer>false</organismsDiffer>
    <experiments>3</experiments>
</comment>
<comment type="interaction">
    <interactant intactId="EBI-10171570">
        <id>Q68D86</id>
    </interactant>
    <interactant intactId="EBI-745392">
        <id>Q9BSW7</id>
        <label>SYT17</label>
    </interactant>
    <organismsDiffer>false</organismsDiffer>
    <experiments>3</experiments>
</comment>
<comment type="interaction">
    <interactant intactId="EBI-10171570">
        <id>Q68D86</id>
    </interactant>
    <interactant intactId="EBI-11955057">
        <id>Q8N8B7-2</id>
        <label>TCEANC</label>
    </interactant>
    <organismsDiffer>false</organismsDiffer>
    <experiments>3</experiments>
</comment>
<comment type="interaction">
    <interactant intactId="EBI-10171570">
        <id>Q68D86</id>
    </interactant>
    <interactant intactId="EBI-3923210">
        <id>Q8TDR4</id>
        <label>TCP10L</label>
    </interactant>
    <organismsDiffer>false</organismsDiffer>
    <experiments>3</experiments>
</comment>
<comment type="interaction">
    <interactant intactId="EBI-10171570">
        <id>Q68D86</id>
    </interactant>
    <interactant intactId="EBI-1105213">
        <id>Q9UBB9</id>
        <label>TFIP11</label>
    </interactant>
    <organismsDiffer>false</organismsDiffer>
    <experiments>3</experiments>
</comment>
<comment type="interaction">
    <interactant intactId="EBI-10171570">
        <id>Q68D86</id>
    </interactant>
    <interactant intactId="EBI-746692">
        <id>P19237</id>
        <label>TNNI1</label>
    </interactant>
    <organismsDiffer>false</organismsDiffer>
    <experiments>3</experiments>
</comment>
<comment type="interaction">
    <interactant intactId="EBI-10171570">
        <id>Q68D86</id>
    </interactant>
    <interactant intactId="EBI-10184033">
        <id>Q5VU62</id>
        <label>TPM3</label>
    </interactant>
    <organismsDiffer>false</organismsDiffer>
    <experiments>3</experiments>
</comment>
<comment type="interaction">
    <interactant intactId="EBI-10171570">
        <id>Q68D86</id>
    </interactant>
    <interactant intactId="EBI-719493">
        <id>P14373</id>
        <label>TRIM27</label>
    </interactant>
    <organismsDiffer>false</organismsDiffer>
    <experiments>6</experiments>
</comment>
<comment type="interaction">
    <interactant intactId="EBI-10171570">
        <id>Q68D86</id>
    </interactant>
    <interactant intactId="EBI-2130429">
        <id>Q9BYV2</id>
        <label>TRIM54</label>
    </interactant>
    <organismsDiffer>false</organismsDiffer>
    <experiments>6</experiments>
</comment>
<comment type="interaction">
    <interactant intactId="EBI-10171570">
        <id>Q68D86</id>
    </interactant>
    <interactant intactId="EBI-10241197">
        <id>Q3SY00</id>
        <label>TSGA10IP</label>
    </interactant>
    <organismsDiffer>false</organismsDiffer>
    <experiments>3</experiments>
</comment>
<comment type="interaction">
    <interactant intactId="EBI-10171570">
        <id>Q68D86</id>
    </interactant>
    <interactant intactId="EBI-9090990">
        <id>Q5W5X9-3</id>
        <label>TTC23</label>
    </interactant>
    <organismsDiffer>false</organismsDiffer>
    <experiments>3</experiments>
</comment>
<comment type="interaction">
    <interactant intactId="EBI-10171570">
        <id>Q68D86</id>
    </interactant>
    <interactant intactId="EBI-2799833">
        <id>Q8N1B4</id>
        <label>VPS52</label>
    </interactant>
    <organismsDiffer>false</organismsDiffer>
    <experiments>3</experiments>
</comment>
<comment type="interaction">
    <interactant intactId="EBI-10171570">
        <id>Q68D86</id>
    </interactant>
    <interactant intactId="EBI-10188476">
        <id>A0A0C4DGF1</id>
        <label>ZBTB32</label>
    </interactant>
    <organismsDiffer>false</organismsDiffer>
    <experiments>3</experiments>
</comment>
<comment type="interaction">
    <interactant intactId="EBI-10171570">
        <id>Q68D86</id>
    </interactant>
    <interactant intactId="EBI-12287587">
        <id>B2RXF5</id>
        <label>ZBTB42</label>
    </interactant>
    <organismsDiffer>false</organismsDiffer>
    <experiments>3</experiments>
</comment>
<comment type="interaction">
    <interactant intactId="EBI-10171570">
        <id>Q68D86</id>
    </interactant>
    <interactant intactId="EBI-14104088">
        <id>Q53FD0-2</id>
        <label>ZC2HC1C</label>
    </interactant>
    <organismsDiffer>false</organismsDiffer>
    <experiments>6</experiments>
</comment>
<comment type="interaction">
    <interactant intactId="EBI-10171570">
        <id>Q68D86</id>
    </interactant>
    <interactant intactId="EBI-717634">
        <id>P17024</id>
        <label>ZNF20</label>
    </interactant>
    <organismsDiffer>false</organismsDiffer>
    <experiments>6</experiments>
</comment>
<comment type="interaction">
    <interactant intactId="EBI-10171570">
        <id>Q68D86</id>
    </interactant>
    <interactant intactId="EBI-10177272">
        <id>P15622-3</id>
        <label>ZNF250</label>
    </interactant>
    <organismsDiffer>false</organismsDiffer>
    <experiments>3</experiments>
</comment>
<comment type="interaction">
    <interactant intactId="EBI-10171570">
        <id>Q68D86</id>
    </interactant>
    <interactant intactId="EBI-10172590">
        <id>Q7Z3I7</id>
        <label>ZNF572</label>
    </interactant>
    <organismsDiffer>false</organismsDiffer>
    <experiments>6</experiments>
</comment>
<comment type="interaction">
    <interactant intactId="EBI-10171570">
        <id>Q68D86</id>
    </interactant>
    <interactant intactId="EBI-4395669">
        <id>Q6ZNG0</id>
        <label>ZNF620</label>
    </interactant>
    <organismsDiffer>false</organismsDiffer>
    <experiments>3</experiments>
</comment>
<comment type="interaction">
    <interactant intactId="EBI-10171570">
        <id>Q68D86</id>
    </interactant>
    <interactant intactId="EBI-4395732">
        <id>P0C7X2</id>
        <label>ZNF688</label>
    </interactant>
    <organismsDiffer>false</organismsDiffer>
    <experiments>3</experiments>
</comment>
<comment type="interaction">
    <interactant intactId="EBI-10171570">
        <id>Q68D86</id>
    </interactant>
    <interactant intactId="EBI-10251462">
        <id>Q6NX45</id>
        <label>ZNF774</label>
    </interactant>
    <organismsDiffer>false</organismsDiffer>
    <experiments>3</experiments>
</comment>
<comment type="subcellular location">
    <subcellularLocation>
        <location evidence="4">Cytoplasm</location>
        <location evidence="4">Cytoskeleton</location>
        <location evidence="4">Microtubule organizing center</location>
        <location evidence="4">Centrosome</location>
        <location evidence="4">Centriole</location>
    </subcellularLocation>
    <text evidence="4">Concentrated at the proximal ends of centrioles where it forms fibers (PubMed:30404835). Centrosomal localization becomes weak when cells enter prophase and is significantly decreased in metaphase (PubMed:30404835).</text>
</comment>
<comment type="alternative products">
    <event type="alternative splicing"/>
    <isoform>
        <id>Q68D86-1</id>
        <name>1</name>
        <sequence type="displayed"/>
    </isoform>
    <isoform>
        <id>Q68D86-2</id>
        <name>2</name>
        <sequence type="described" ref="VSP_014688 VSP_014689"/>
    </isoform>
</comment>
<comment type="PTM">
    <text evidence="4">Phosphorylated directly or indirectly by NEK2 during mitosis which causes dissociation of CCDC102B from the centrosome and allows for centrosome separation.</text>
</comment>
<comment type="sequence caution" evidence="6">
    <conflict type="miscellaneous discrepancy">
        <sequence resource="EMBL-CDS" id="AAH56269"/>
    </conflict>
    <text>wrong intron-exon boundaries.</text>
</comment>
<comment type="sequence caution" evidence="6">
    <conflict type="erroneous initiation">
        <sequence resource="EMBL-CDS" id="AAI26449"/>
    </conflict>
    <text>Truncated N-terminus.</text>
</comment>
<comment type="sequence caution" evidence="6">
    <conflict type="erroneous initiation">
        <sequence resource="EMBL-CDS" id="AAI26451"/>
    </conflict>
    <text>Truncated N-terminus.</text>
</comment>
<comment type="sequence caution" evidence="6">
    <conflict type="erroneous initiation">
        <sequence resource="EMBL-CDS" id="BAB15706"/>
    </conflict>
    <text>Truncated N-terminus.</text>
</comment>
<comment type="sequence caution" evidence="6">
    <conflict type="erroneous initiation">
        <sequence resource="EMBL-CDS" id="CAD38721"/>
    </conflict>
    <text>Truncated N-terminus.</text>
</comment>
<comment type="sequence caution" evidence="6">
    <conflict type="frameshift">
        <sequence resource="EMBL-CDS" id="CAD38721"/>
    </conflict>
</comment>
<organism>
    <name type="scientific">Homo sapiens</name>
    <name type="common">Human</name>
    <dbReference type="NCBI Taxonomy" id="9606"/>
    <lineage>
        <taxon>Eukaryota</taxon>
        <taxon>Metazoa</taxon>
        <taxon>Chordata</taxon>
        <taxon>Craniata</taxon>
        <taxon>Vertebrata</taxon>
        <taxon>Euteleostomi</taxon>
        <taxon>Mammalia</taxon>
        <taxon>Eutheria</taxon>
        <taxon>Euarchontoglires</taxon>
        <taxon>Primates</taxon>
        <taxon>Haplorrhini</taxon>
        <taxon>Catarrhini</taxon>
        <taxon>Hominidae</taxon>
        <taxon>Homo</taxon>
    </lineage>
</organism>
<feature type="chain" id="PRO_0000079308" description="Coiled-coil domain-containing protein 102B">
    <location>
        <begin position="1"/>
        <end position="513"/>
    </location>
</feature>
<feature type="region of interest" description="Required for centriolar localization and for interaction with CEP250, CROCC, LRRC45 and NEK2" evidence="4">
    <location>
        <begin position="1"/>
        <end position="217"/>
    </location>
</feature>
<feature type="region of interest" description="Disordered" evidence="2">
    <location>
        <begin position="493"/>
        <end position="513"/>
    </location>
</feature>
<feature type="coiled-coil region" evidence="1">
    <location>
        <begin position="72"/>
        <end position="142"/>
    </location>
</feature>
<feature type="coiled-coil region" evidence="1">
    <location>
        <begin position="268"/>
        <end position="337"/>
    </location>
</feature>
<feature type="coiled-coil region" evidence="1">
    <location>
        <begin position="363"/>
        <end position="513"/>
    </location>
</feature>
<feature type="modified residue" description="Phosphoserine" evidence="4">
    <location>
        <position position="21"/>
    </location>
</feature>
<feature type="modified residue" description="Phosphoserine" evidence="4">
    <location>
        <position position="22"/>
    </location>
</feature>
<feature type="modified residue" description="Phosphoserine" evidence="4">
    <location>
        <position position="34"/>
    </location>
</feature>
<feature type="modified residue" description="Phosphoserine" evidence="4">
    <location>
        <position position="135"/>
    </location>
</feature>
<feature type="modified residue" description="Phosphoserine" evidence="4">
    <location>
        <position position="142"/>
    </location>
</feature>
<feature type="modified residue" description="Phosphoserine" evidence="4">
    <location>
        <position position="194"/>
    </location>
</feature>
<feature type="modified residue" description="Phosphoserine" evidence="4">
    <location>
        <position position="210"/>
    </location>
</feature>
<feature type="modified residue" description="Phosphoserine" evidence="4">
    <location>
        <position position="401"/>
    </location>
</feature>
<feature type="modified residue" description="Phosphoserine" evidence="4">
    <location>
        <position position="404"/>
    </location>
</feature>
<feature type="modified residue" description="Phosphoserine" evidence="4">
    <location>
        <position position="406"/>
    </location>
</feature>
<feature type="splice variant" id="VSP_014688" description="In isoform 2." evidence="5">
    <original>LDDSL</original>
    <variation>VLLYE</variation>
    <location>
        <begin position="479"/>
        <end position="483"/>
    </location>
</feature>
<feature type="splice variant" id="VSP_014689" description="In isoform 2." evidence="5">
    <location>
        <begin position="484"/>
        <end position="513"/>
    </location>
</feature>
<feature type="sequence variant" id="VAR_047331" description="In dbSNP:rs572020." evidence="3">
    <original>K</original>
    <variation>N</variation>
    <location>
        <position position="153"/>
    </location>
</feature>
<feature type="sequence variant" id="VAR_047332" description="In dbSNP:rs2187094." evidence="3">
    <original>K</original>
    <variation>R</variation>
    <location>
        <position position="298"/>
    </location>
</feature>
<feature type="sequence variant" id="VAR_022893" description="In dbSNP:rs745894.">
    <original>C</original>
    <variation>F</variation>
    <location>
        <position position="346"/>
    </location>
</feature>
<feature type="sequence variant" id="VAR_047333" description="In dbSNP:rs34102373.">
    <original>E</original>
    <variation>G</variation>
    <location>
        <position position="370"/>
    </location>
</feature>
<feature type="sequence variant" id="VAR_047334" description="In dbSNP:rs17080065.">
    <original>N</original>
    <variation>K</variation>
    <location>
        <position position="425"/>
    </location>
</feature>
<feature type="sequence variant" id="VAR_022894" description="In dbSNP:rs9963788.">
    <original>A</original>
    <variation>P</variation>
    <location>
        <position position="429"/>
    </location>
</feature>
<feature type="mutagenesis site" description="Substantial decrease in phosphorylation; when associated with A-22, A-34, A-135, A-142, A-194, A-210, A-401, A-404 and A-406." evidence="4">
    <original>S</original>
    <variation>A</variation>
    <location>
        <position position="21"/>
    </location>
</feature>
<feature type="mutagenesis site" description="Substantial decrease in phosphorylation; when associated with A-21, A-34, A-135, A-142, A-194, A-210, A-401, A-404 and A-406." evidence="4">
    <original>S</original>
    <variation>A</variation>
    <location>
        <position position="22"/>
    </location>
</feature>
<feature type="mutagenesis site" description="Substantial decrease in phosphorylation; when associated with A-21, A-22, A-135, A-142, A-194, A-210, A-401, A-404 and A-406." evidence="4">
    <original>S</original>
    <variation>A</variation>
    <location>
        <position position="34"/>
    </location>
</feature>
<feature type="mutagenesis site" description="Substantial decrease in phosphorylation; when associated with A-21, A-22, A-34, A-142, A-194, A-210, A-401, A-404 and A-406." evidence="4">
    <original>S</original>
    <variation>A</variation>
    <location>
        <position position="135"/>
    </location>
</feature>
<feature type="mutagenesis site" description="Substantial decrease in phosphorylation; when associated with A-21, A-22, A-34, A-135, A-194, A-210, A-401, A-404 and A-406." evidence="4">
    <original>S</original>
    <variation>A</variation>
    <location>
        <position position="142"/>
    </location>
</feature>
<feature type="mutagenesis site" description="Substantial decrease in phosphorylation; when associated with A-21, A-22, A-34, A-135, A-142, A-210, A-401, A-404 and A-406." evidence="4">
    <original>S</original>
    <variation>A</variation>
    <location>
        <position position="194"/>
    </location>
</feature>
<feature type="mutagenesis site" description="Substantial decrease in phosphorylation; when associated with A-21, A-22, A-34, A-135, A-142, A-194, A-401, A-404 and A-406." evidence="4">
    <original>S</original>
    <variation>A</variation>
    <location>
        <position position="210"/>
    </location>
</feature>
<feature type="mutagenesis site" description="Substantial decrease in phosphorylation; when associated with A-21, A-22, A-34, A-135, A-142, A-194, A-210, A-404 and A-406." evidence="4">
    <original>S</original>
    <variation>A</variation>
    <location>
        <position position="401"/>
    </location>
</feature>
<feature type="mutagenesis site" description="Substantial decrease in phosphorylation; when associated with A-21, A-22, A-34, A-135, A-142, A-194, A-210, A-401 and A-406." evidence="4">
    <original>S</original>
    <variation>A</variation>
    <location>
        <position position="404"/>
    </location>
</feature>
<feature type="mutagenesis site" description="Substantial decrease in phosphorylation; when associated with A-21, A-22, A-34, A-135, A-142, A-194, A-210, A-401 and A-404." evidence="4">
    <original>S</original>
    <variation>A</variation>
    <location>
        <position position="406"/>
    </location>
</feature>
<feature type="sequence conflict" description="In Ref. 1; CAH18334." evidence="6" ref="1">
    <original>M</original>
    <variation>T</variation>
    <location>
        <position position="131"/>
    </location>
</feature>
<feature type="sequence conflict" description="In Ref. 1; CAH18334." evidence="6" ref="1">
    <original>R</original>
    <variation>G</variation>
    <location>
        <position position="382"/>
    </location>
</feature>
<feature type="sequence conflict" description="In Ref. 1; CAH18334." evidence="6" ref="1">
    <original>K</original>
    <variation>R</variation>
    <location>
        <position position="469"/>
    </location>
</feature>
<sequence length="513" mass="60448">MNLDSIHRLIEETQIFQMQQSSIKSRGDMVAPASPPRDTCNTCFPLHGLQSHAAHNFCAHSYNTNKWDICEELRLRELEEVKARAAQMEKTMRWWSDCTANWREKWSKVRAERNSAREEGRQLRIKLEMAMKELSTLKKKQSLPPQKEALEAKVTQDLKLPGFVEESCEHTDQFQLSSQMHESIREYLVKRQFSTKEDTNNKEQGVVIDSLKLSEEMKPNLDGVDLFNNGGSGNGETKTGLRLKAINLPLENEVTEISALQVHLDEFQKILWKEREMRTALEKEIERLESALSLWKWKYEELKESKPKNVKEFDILLGQHNDEMQELSGNIKEESKSQNSKDRVICELRAELERLQAENTSEWDKREILEREKQGLERENRRLKIQVKEMEELLDKKNRLSANSQSPDFKMSQIDLQEKNQELLNLQHAYYKLNRQYQANIAELTHANNRVDQNEAEVKKLRLRVEELKQGLNQKEDELDDSLNQIRKLQRSLDEEKERNENLETELRHLQNW</sequence>
<name>C102B_HUMAN</name>
<evidence type="ECO:0000255" key="1"/>
<evidence type="ECO:0000256" key="2">
    <source>
        <dbReference type="SAM" id="MobiDB-lite"/>
    </source>
</evidence>
<evidence type="ECO:0000269" key="3">
    <source>
    </source>
</evidence>
<evidence type="ECO:0000269" key="4">
    <source>
    </source>
</evidence>
<evidence type="ECO:0000303" key="5">
    <source>
    </source>
</evidence>
<evidence type="ECO:0000305" key="6"/>
<accession>Q68D86</accession>
<accession>A1A4H1</accession>
<accession>Q7Z467</accession>
<accession>Q8NDK7</accession>
<accession>Q9H5C1</accession>
<dbReference type="EMBL" id="CR749520">
    <property type="protein sequence ID" value="CAH18334.2"/>
    <property type="molecule type" value="mRNA"/>
</dbReference>
<dbReference type="EMBL" id="AL833863">
    <property type="protein sequence ID" value="CAD38721.2"/>
    <property type="status" value="ALT_SEQ"/>
    <property type="molecule type" value="mRNA"/>
</dbReference>
<dbReference type="EMBL" id="AC022035">
    <property type="status" value="NOT_ANNOTATED_CDS"/>
    <property type="molecule type" value="Genomic_DNA"/>
</dbReference>
<dbReference type="EMBL" id="AC096708">
    <property type="status" value="NOT_ANNOTATED_CDS"/>
    <property type="molecule type" value="Genomic_DNA"/>
</dbReference>
<dbReference type="EMBL" id="AC011087">
    <property type="status" value="NOT_ANNOTATED_CDS"/>
    <property type="molecule type" value="Genomic_DNA"/>
</dbReference>
<dbReference type="EMBL" id="BC056269">
    <property type="protein sequence ID" value="AAH56269.1"/>
    <property type="status" value="ALT_SEQ"/>
    <property type="molecule type" value="mRNA"/>
</dbReference>
<dbReference type="EMBL" id="BC126448">
    <property type="protein sequence ID" value="AAI26449.1"/>
    <property type="status" value="ALT_INIT"/>
    <property type="molecule type" value="mRNA"/>
</dbReference>
<dbReference type="EMBL" id="BC126450">
    <property type="protein sequence ID" value="AAI26451.1"/>
    <property type="status" value="ALT_INIT"/>
    <property type="molecule type" value="mRNA"/>
</dbReference>
<dbReference type="EMBL" id="AK027247">
    <property type="protein sequence ID" value="BAB15706.1"/>
    <property type="status" value="ALT_INIT"/>
    <property type="molecule type" value="mRNA"/>
</dbReference>
<dbReference type="CCDS" id="CCDS11996.2">
    <molecule id="Q68D86-1"/>
</dbReference>
<dbReference type="RefSeq" id="NP_001087198.2">
    <molecule id="Q68D86-1"/>
    <property type="nucleotide sequence ID" value="NM_001093729.2"/>
</dbReference>
<dbReference type="RefSeq" id="NP_079057.3">
    <molecule id="Q68D86-1"/>
    <property type="nucleotide sequence ID" value="NM_024781.3"/>
</dbReference>
<dbReference type="RefSeq" id="XP_016881464.1">
    <property type="nucleotide sequence ID" value="XM_017025975.1"/>
</dbReference>
<dbReference type="SMR" id="Q68D86"/>
<dbReference type="BioGRID" id="122930">
    <property type="interactions" value="151"/>
</dbReference>
<dbReference type="FunCoup" id="Q68D86">
    <property type="interactions" value="158"/>
</dbReference>
<dbReference type="IntAct" id="Q68D86">
    <property type="interactions" value="150"/>
</dbReference>
<dbReference type="STRING" id="9606.ENSP00000353377"/>
<dbReference type="iPTMnet" id="Q68D86"/>
<dbReference type="PhosphoSitePlus" id="Q68D86"/>
<dbReference type="BioMuta" id="CCDC102B"/>
<dbReference type="DMDM" id="215274243"/>
<dbReference type="jPOST" id="Q68D86"/>
<dbReference type="MassIVE" id="Q68D86"/>
<dbReference type="PaxDb" id="9606-ENSP00000353377"/>
<dbReference type="PeptideAtlas" id="Q68D86"/>
<dbReference type="ProteomicsDB" id="66059">
    <molecule id="Q68D86-1"/>
</dbReference>
<dbReference type="ProteomicsDB" id="66060">
    <molecule id="Q68D86-2"/>
</dbReference>
<dbReference type="Antibodypedia" id="49098">
    <property type="antibodies" value="116 antibodies from 22 providers"/>
</dbReference>
<dbReference type="DNASU" id="79839"/>
<dbReference type="Ensembl" id="ENST00000360242.9">
    <molecule id="Q68D86-1"/>
    <property type="protein sequence ID" value="ENSP00000353377.5"/>
    <property type="gene ID" value="ENSG00000150636.17"/>
</dbReference>
<dbReference type="Ensembl" id="ENST00000584156.5">
    <molecule id="Q68D86-2"/>
    <property type="protein sequence ID" value="ENSP00000463111.1"/>
    <property type="gene ID" value="ENSG00000150636.17"/>
</dbReference>
<dbReference type="GeneID" id="79839"/>
<dbReference type="KEGG" id="hsa:79839"/>
<dbReference type="MANE-Select" id="ENST00000360242.9">
    <property type="protein sequence ID" value="ENSP00000353377.5"/>
    <property type="RefSeq nucleotide sequence ID" value="NM_024781.3"/>
    <property type="RefSeq protein sequence ID" value="NP_079057.3"/>
</dbReference>
<dbReference type="UCSC" id="uc002lki.2">
    <molecule id="Q68D86-1"/>
    <property type="organism name" value="human"/>
</dbReference>
<dbReference type="AGR" id="HGNC:26295"/>
<dbReference type="CTD" id="79839"/>
<dbReference type="DisGeNET" id="79839"/>
<dbReference type="GeneCards" id="CCDC102B"/>
<dbReference type="HGNC" id="HGNC:26295">
    <property type="gene designation" value="CCDC102B"/>
</dbReference>
<dbReference type="HPA" id="ENSG00000150636">
    <property type="expression patterns" value="Tissue enhanced (placenta)"/>
</dbReference>
<dbReference type="neXtProt" id="NX_Q68D86"/>
<dbReference type="OpenTargets" id="ENSG00000150636"/>
<dbReference type="PharmGKB" id="PA134948675"/>
<dbReference type="VEuPathDB" id="HostDB:ENSG00000150636"/>
<dbReference type="eggNOG" id="ENOG502QSJ6">
    <property type="taxonomic scope" value="Eukaryota"/>
</dbReference>
<dbReference type="GeneTree" id="ENSGT00940000163731"/>
<dbReference type="HOGENOM" id="CLU_033486_2_0_1"/>
<dbReference type="InParanoid" id="Q68D86"/>
<dbReference type="OMA" id="QHAYHKL"/>
<dbReference type="OrthoDB" id="5984396at2759"/>
<dbReference type="PAN-GO" id="Q68D86">
    <property type="GO annotations" value="0 GO annotations based on evolutionary models"/>
</dbReference>
<dbReference type="PhylomeDB" id="Q68D86"/>
<dbReference type="TreeFam" id="TF320856"/>
<dbReference type="PathwayCommons" id="Q68D86"/>
<dbReference type="SignaLink" id="Q68D86"/>
<dbReference type="SIGNOR" id="Q68D86"/>
<dbReference type="BioGRID-ORCS" id="79839">
    <property type="hits" value="18 hits in 1151 CRISPR screens"/>
</dbReference>
<dbReference type="ChiTaRS" id="CCDC102B">
    <property type="organism name" value="human"/>
</dbReference>
<dbReference type="GenomeRNAi" id="79839"/>
<dbReference type="Pharos" id="Q68D86">
    <property type="development level" value="Tbio"/>
</dbReference>
<dbReference type="PRO" id="PR:Q68D86"/>
<dbReference type="Proteomes" id="UP000005640">
    <property type="component" value="Chromosome 18"/>
</dbReference>
<dbReference type="RNAct" id="Q68D86">
    <property type="molecule type" value="protein"/>
</dbReference>
<dbReference type="Bgee" id="ENSG00000150636">
    <property type="expression patterns" value="Expressed in sural nerve and 121 other cell types or tissues"/>
</dbReference>
<dbReference type="ExpressionAtlas" id="Q68D86">
    <property type="expression patterns" value="baseline and differential"/>
</dbReference>
<dbReference type="GO" id="GO:0005814">
    <property type="term" value="C:centriole"/>
    <property type="evidence" value="ECO:0000314"/>
    <property type="project" value="UniProtKB"/>
</dbReference>
<dbReference type="GO" id="GO:0005737">
    <property type="term" value="C:cytoplasm"/>
    <property type="evidence" value="ECO:0007669"/>
    <property type="project" value="UniProtKB-KW"/>
</dbReference>
<dbReference type="GO" id="GO:0120283">
    <property type="term" value="F:protein serine/threonine kinase binding"/>
    <property type="evidence" value="ECO:0000353"/>
    <property type="project" value="UniProtKB"/>
</dbReference>
<dbReference type="GO" id="GO:0010457">
    <property type="term" value="P:centriole-centriole cohesion"/>
    <property type="evidence" value="ECO:0000315"/>
    <property type="project" value="UniProtKB"/>
</dbReference>
<dbReference type="PANTHER" id="PTHR46292">
    <property type="entry name" value="COILED-COIL DOMAIN-CONTAINING PROTEIN 102A"/>
    <property type="match status" value="1"/>
</dbReference>
<dbReference type="PANTHER" id="PTHR46292:SF2">
    <property type="entry name" value="COILED-COIL DOMAIN-CONTAINING PROTEIN 102B"/>
    <property type="match status" value="1"/>
</dbReference>